<organism>
    <name type="scientific">Escherichia coli O45:K1 (strain S88 / ExPEC)</name>
    <dbReference type="NCBI Taxonomy" id="585035"/>
    <lineage>
        <taxon>Bacteria</taxon>
        <taxon>Pseudomonadati</taxon>
        <taxon>Pseudomonadota</taxon>
        <taxon>Gammaproteobacteria</taxon>
        <taxon>Enterobacterales</taxon>
        <taxon>Enterobacteriaceae</taxon>
        <taxon>Escherichia</taxon>
    </lineage>
</organism>
<reference key="1">
    <citation type="journal article" date="2009" name="PLoS Genet.">
        <title>Organised genome dynamics in the Escherichia coli species results in highly diverse adaptive paths.</title>
        <authorList>
            <person name="Touchon M."/>
            <person name="Hoede C."/>
            <person name="Tenaillon O."/>
            <person name="Barbe V."/>
            <person name="Baeriswyl S."/>
            <person name="Bidet P."/>
            <person name="Bingen E."/>
            <person name="Bonacorsi S."/>
            <person name="Bouchier C."/>
            <person name="Bouvet O."/>
            <person name="Calteau A."/>
            <person name="Chiapello H."/>
            <person name="Clermont O."/>
            <person name="Cruveiller S."/>
            <person name="Danchin A."/>
            <person name="Diard M."/>
            <person name="Dossat C."/>
            <person name="Karoui M.E."/>
            <person name="Frapy E."/>
            <person name="Garry L."/>
            <person name="Ghigo J.M."/>
            <person name="Gilles A.M."/>
            <person name="Johnson J."/>
            <person name="Le Bouguenec C."/>
            <person name="Lescat M."/>
            <person name="Mangenot S."/>
            <person name="Martinez-Jehanne V."/>
            <person name="Matic I."/>
            <person name="Nassif X."/>
            <person name="Oztas S."/>
            <person name="Petit M.A."/>
            <person name="Pichon C."/>
            <person name="Rouy Z."/>
            <person name="Ruf C.S."/>
            <person name="Schneider D."/>
            <person name="Tourret J."/>
            <person name="Vacherie B."/>
            <person name="Vallenet D."/>
            <person name="Medigue C."/>
            <person name="Rocha E.P.C."/>
            <person name="Denamur E."/>
        </authorList>
    </citation>
    <scope>NUCLEOTIDE SEQUENCE [LARGE SCALE GENOMIC DNA]</scope>
    <source>
        <strain>S88 / ExPEC</strain>
    </source>
</reference>
<feature type="chain" id="PRO_1000125492" description="Sulfate transporter CysZ">
    <location>
        <begin position="1"/>
        <end position="253"/>
    </location>
</feature>
<feature type="transmembrane region" description="Helical" evidence="1">
    <location>
        <begin position="31"/>
        <end position="51"/>
    </location>
</feature>
<feature type="transmembrane region" description="Helical" evidence="1">
    <location>
        <begin position="75"/>
        <end position="95"/>
    </location>
</feature>
<feature type="transmembrane region" description="Helical" evidence="1">
    <location>
        <begin position="151"/>
        <end position="171"/>
    </location>
</feature>
<feature type="transmembrane region" description="Helical" evidence="1">
    <location>
        <begin position="222"/>
        <end position="242"/>
    </location>
</feature>
<keyword id="KW-0028">Amino-acid biosynthesis</keyword>
<keyword id="KW-0997">Cell inner membrane</keyword>
<keyword id="KW-1003">Cell membrane</keyword>
<keyword id="KW-0198">Cysteine biosynthesis</keyword>
<keyword id="KW-0472">Membrane</keyword>
<keyword id="KW-1185">Reference proteome</keyword>
<keyword id="KW-0764">Sulfate transport</keyword>
<keyword id="KW-0812">Transmembrane</keyword>
<keyword id="KW-1133">Transmembrane helix</keyword>
<keyword id="KW-0813">Transport</keyword>
<comment type="function">
    <text evidence="1">High affinity, high specificity proton-dependent sulfate transporter, which mediates sulfate uptake. Provides the sulfur source for the cysteine synthesis pathway.</text>
</comment>
<comment type="subcellular location">
    <subcellularLocation>
        <location evidence="1">Cell inner membrane</location>
        <topology evidence="1">Multi-pass membrane protein</topology>
    </subcellularLocation>
</comment>
<comment type="similarity">
    <text evidence="1">Belongs to the CysZ family.</text>
</comment>
<dbReference type="EMBL" id="CU928161">
    <property type="protein sequence ID" value="CAR03875.1"/>
    <property type="molecule type" value="Genomic_DNA"/>
</dbReference>
<dbReference type="RefSeq" id="WP_000254839.1">
    <property type="nucleotide sequence ID" value="NC_011742.1"/>
</dbReference>
<dbReference type="SMR" id="B7MHR7"/>
<dbReference type="GeneID" id="93774718"/>
<dbReference type="KEGG" id="ecz:ECS88_2603"/>
<dbReference type="HOGENOM" id="CLU_070331_1_0_6"/>
<dbReference type="Proteomes" id="UP000000747">
    <property type="component" value="Chromosome"/>
</dbReference>
<dbReference type="GO" id="GO:0005886">
    <property type="term" value="C:plasma membrane"/>
    <property type="evidence" value="ECO:0007669"/>
    <property type="project" value="UniProtKB-SubCell"/>
</dbReference>
<dbReference type="GO" id="GO:0009675">
    <property type="term" value="F:high-affinity sulfate:proton symporter activity"/>
    <property type="evidence" value="ECO:0007669"/>
    <property type="project" value="TreeGrafter"/>
</dbReference>
<dbReference type="GO" id="GO:0019344">
    <property type="term" value="P:cysteine biosynthetic process"/>
    <property type="evidence" value="ECO:0007669"/>
    <property type="project" value="UniProtKB-UniRule"/>
</dbReference>
<dbReference type="GO" id="GO:0000103">
    <property type="term" value="P:sulfate assimilation"/>
    <property type="evidence" value="ECO:0007669"/>
    <property type="project" value="InterPro"/>
</dbReference>
<dbReference type="HAMAP" id="MF_00468">
    <property type="entry name" value="CysZ"/>
    <property type="match status" value="1"/>
</dbReference>
<dbReference type="InterPro" id="IPR050480">
    <property type="entry name" value="CysZ_sulfate_transptr"/>
</dbReference>
<dbReference type="InterPro" id="IPR022985">
    <property type="entry name" value="Sulfate_CysZ"/>
</dbReference>
<dbReference type="NCBIfam" id="NF003433">
    <property type="entry name" value="PRK04949.1"/>
    <property type="match status" value="1"/>
</dbReference>
<dbReference type="PANTHER" id="PTHR37468">
    <property type="entry name" value="SULFATE TRANSPORTER CYSZ"/>
    <property type="match status" value="1"/>
</dbReference>
<dbReference type="PANTHER" id="PTHR37468:SF1">
    <property type="entry name" value="SULFATE TRANSPORTER CYSZ"/>
    <property type="match status" value="1"/>
</dbReference>
<dbReference type="Pfam" id="PF07264">
    <property type="entry name" value="EI24"/>
    <property type="match status" value="1"/>
</dbReference>
<gene>
    <name evidence="1" type="primary">cysZ</name>
    <name type="ordered locus">ECS88_2603</name>
</gene>
<evidence type="ECO:0000255" key="1">
    <source>
        <dbReference type="HAMAP-Rule" id="MF_00468"/>
    </source>
</evidence>
<proteinExistence type="inferred from homology"/>
<protein>
    <recommendedName>
        <fullName evidence="1">Sulfate transporter CysZ</fullName>
    </recommendedName>
</protein>
<sequence>MVSSFTSAPRSGFYYFAQGWKLVSQPGIRRFVILPLLVNILLMGGAFWWLFTQLDVWIPTLMSYVPDWLQWLSYLLWPLAVISVLLVFGYFFSTIANWIAAPFNGLLAEQLEARLTGATPPDTGIFGIMKDVPRIMKREWQKFAWYLPRAIVLLILYFIPGIGQTVAPVLWFLFSAWMLAIQYCDYPFDNHKVPFKEMRTALRTRKITNMQFGALTSLFTMIPLLNLFIMPVAVCGATAMWVDCYRDKHAMWR</sequence>
<name>CYSZ_ECO45</name>
<accession>B7MHR7</accession>